<keyword id="KW-0687">Ribonucleoprotein</keyword>
<keyword id="KW-0689">Ribosomal protein</keyword>
<protein>
    <recommendedName>
        <fullName evidence="1">Large ribosomal subunit protein bL27</fullName>
    </recommendedName>
    <alternativeName>
        <fullName evidence="3">50S ribosomal protein L27</fullName>
    </alternativeName>
</protein>
<dbReference type="EMBL" id="AM711867">
    <property type="protein sequence ID" value="CAN01536.1"/>
    <property type="molecule type" value="Genomic_DNA"/>
</dbReference>
<dbReference type="RefSeq" id="WP_012038176.1">
    <property type="nucleotide sequence ID" value="NC_009480.1"/>
</dbReference>
<dbReference type="SMR" id="A5CR31"/>
<dbReference type="GeneID" id="92947467"/>
<dbReference type="KEGG" id="cmi:CMM_1490"/>
<dbReference type="eggNOG" id="COG0211">
    <property type="taxonomic scope" value="Bacteria"/>
</dbReference>
<dbReference type="HOGENOM" id="CLU_095424_4_0_11"/>
<dbReference type="OrthoDB" id="9803474at2"/>
<dbReference type="Proteomes" id="UP000001564">
    <property type="component" value="Chromosome"/>
</dbReference>
<dbReference type="GO" id="GO:0022625">
    <property type="term" value="C:cytosolic large ribosomal subunit"/>
    <property type="evidence" value="ECO:0007669"/>
    <property type="project" value="TreeGrafter"/>
</dbReference>
<dbReference type="GO" id="GO:0003735">
    <property type="term" value="F:structural constituent of ribosome"/>
    <property type="evidence" value="ECO:0007669"/>
    <property type="project" value="InterPro"/>
</dbReference>
<dbReference type="GO" id="GO:0006412">
    <property type="term" value="P:translation"/>
    <property type="evidence" value="ECO:0007669"/>
    <property type="project" value="UniProtKB-UniRule"/>
</dbReference>
<dbReference type="FunFam" id="2.40.50.100:FF:000020">
    <property type="entry name" value="50S ribosomal protein L27"/>
    <property type="match status" value="1"/>
</dbReference>
<dbReference type="Gene3D" id="2.40.50.100">
    <property type="match status" value="1"/>
</dbReference>
<dbReference type="HAMAP" id="MF_00539">
    <property type="entry name" value="Ribosomal_bL27"/>
    <property type="match status" value="1"/>
</dbReference>
<dbReference type="InterPro" id="IPR001684">
    <property type="entry name" value="Ribosomal_bL27"/>
</dbReference>
<dbReference type="InterPro" id="IPR018261">
    <property type="entry name" value="Ribosomal_bL27_CS"/>
</dbReference>
<dbReference type="NCBIfam" id="TIGR00062">
    <property type="entry name" value="L27"/>
    <property type="match status" value="1"/>
</dbReference>
<dbReference type="PANTHER" id="PTHR15893:SF0">
    <property type="entry name" value="LARGE RIBOSOMAL SUBUNIT PROTEIN BL27M"/>
    <property type="match status" value="1"/>
</dbReference>
<dbReference type="PANTHER" id="PTHR15893">
    <property type="entry name" value="RIBOSOMAL PROTEIN L27"/>
    <property type="match status" value="1"/>
</dbReference>
<dbReference type="Pfam" id="PF01016">
    <property type="entry name" value="Ribosomal_L27"/>
    <property type="match status" value="1"/>
</dbReference>
<dbReference type="PRINTS" id="PR00063">
    <property type="entry name" value="RIBOSOMALL27"/>
</dbReference>
<dbReference type="SUPFAM" id="SSF110324">
    <property type="entry name" value="Ribosomal L27 protein-like"/>
    <property type="match status" value="1"/>
</dbReference>
<dbReference type="PROSITE" id="PS00831">
    <property type="entry name" value="RIBOSOMAL_L27"/>
    <property type="match status" value="1"/>
</dbReference>
<name>RL27_CLAM3</name>
<evidence type="ECO:0000255" key="1">
    <source>
        <dbReference type="HAMAP-Rule" id="MF_00539"/>
    </source>
</evidence>
<evidence type="ECO:0000256" key="2">
    <source>
        <dbReference type="SAM" id="MobiDB-lite"/>
    </source>
</evidence>
<evidence type="ECO:0000305" key="3"/>
<organism>
    <name type="scientific">Clavibacter michiganensis subsp. michiganensis (strain NCPPB 382)</name>
    <dbReference type="NCBI Taxonomy" id="443906"/>
    <lineage>
        <taxon>Bacteria</taxon>
        <taxon>Bacillati</taxon>
        <taxon>Actinomycetota</taxon>
        <taxon>Actinomycetes</taxon>
        <taxon>Micrococcales</taxon>
        <taxon>Microbacteriaceae</taxon>
        <taxon>Clavibacter</taxon>
    </lineage>
</organism>
<comment type="similarity">
    <text evidence="1">Belongs to the bacterial ribosomal protein bL27 family.</text>
</comment>
<feature type="chain" id="PRO_1000017452" description="Large ribosomal subunit protein bL27">
    <location>
        <begin position="1"/>
        <end position="84"/>
    </location>
</feature>
<feature type="region of interest" description="Disordered" evidence="2">
    <location>
        <begin position="1"/>
        <end position="21"/>
    </location>
</feature>
<feature type="compositionally biased region" description="Polar residues" evidence="2">
    <location>
        <begin position="7"/>
        <end position="19"/>
    </location>
</feature>
<gene>
    <name evidence="1" type="primary">rpmA</name>
    <name type="ordered locus">CMM_1490</name>
</gene>
<sequence>MAHKKGASSTRNGRDSNAQRLGVKRFGGQVVGAGEIIVRQRGTHFHPGVNVGRGGDDTLFALSAGSVQFGVKGGRKVVNIVVPA</sequence>
<reference key="1">
    <citation type="journal article" date="2008" name="J. Bacteriol.">
        <title>The genome sequence of the tomato-pathogenic actinomycete Clavibacter michiganensis subsp. michiganensis NCPPB382 reveals a large island involved in pathogenicity.</title>
        <authorList>
            <person name="Gartemann K.-H."/>
            <person name="Abt B."/>
            <person name="Bekel T."/>
            <person name="Burger A."/>
            <person name="Engemann J."/>
            <person name="Fluegel M."/>
            <person name="Gaigalat L."/>
            <person name="Goesmann A."/>
            <person name="Graefen I."/>
            <person name="Kalinowski J."/>
            <person name="Kaup O."/>
            <person name="Kirchner O."/>
            <person name="Krause L."/>
            <person name="Linke B."/>
            <person name="McHardy A."/>
            <person name="Meyer F."/>
            <person name="Pohle S."/>
            <person name="Rueckert C."/>
            <person name="Schneiker S."/>
            <person name="Zellermann E.-M."/>
            <person name="Puehler A."/>
            <person name="Eichenlaub R."/>
            <person name="Kaiser O."/>
            <person name="Bartels D."/>
        </authorList>
    </citation>
    <scope>NUCLEOTIDE SEQUENCE [LARGE SCALE GENOMIC DNA]</scope>
    <source>
        <strain>NCPPB 382</strain>
    </source>
</reference>
<accession>A5CR31</accession>
<proteinExistence type="inferred from homology"/>